<dbReference type="EMBL" id="CT573326">
    <property type="protein sequence ID" value="CAK13331.1"/>
    <property type="molecule type" value="Genomic_DNA"/>
</dbReference>
<dbReference type="RefSeq" id="WP_011531791.1">
    <property type="nucleotide sequence ID" value="NC_008027.1"/>
</dbReference>
<dbReference type="SMR" id="Q1IG71"/>
<dbReference type="STRING" id="384676.PSEEN0371"/>
<dbReference type="GeneID" id="32803712"/>
<dbReference type="KEGG" id="pen:PSEEN0371"/>
<dbReference type="eggNOG" id="COG3263">
    <property type="taxonomic scope" value="Bacteria"/>
</dbReference>
<dbReference type="HOGENOM" id="CLU_005912_9_2_6"/>
<dbReference type="OrthoDB" id="9810759at2"/>
<dbReference type="Proteomes" id="UP000000658">
    <property type="component" value="Chromosome"/>
</dbReference>
<dbReference type="GO" id="GO:0005886">
    <property type="term" value="C:plasma membrane"/>
    <property type="evidence" value="ECO:0007669"/>
    <property type="project" value="UniProtKB-SubCell"/>
</dbReference>
<dbReference type="GO" id="GO:0050660">
    <property type="term" value="F:flavin adenine dinucleotide binding"/>
    <property type="evidence" value="ECO:0007669"/>
    <property type="project" value="InterPro"/>
</dbReference>
<dbReference type="GO" id="GO:0015386">
    <property type="term" value="F:potassium:proton antiporter activity"/>
    <property type="evidence" value="ECO:0007669"/>
    <property type="project" value="UniProtKB-UniRule"/>
</dbReference>
<dbReference type="GO" id="GO:0006884">
    <property type="term" value="P:cell volume homeostasis"/>
    <property type="evidence" value="ECO:0007669"/>
    <property type="project" value="InterPro"/>
</dbReference>
<dbReference type="Gene3D" id="1.20.1530.20">
    <property type="match status" value="1"/>
</dbReference>
<dbReference type="Gene3D" id="3.30.465.10">
    <property type="match status" value="1"/>
</dbReference>
<dbReference type="Gene3D" id="3.30.70.1450">
    <property type="entry name" value="Regulator of K+ conductance, C-terminal domain"/>
    <property type="match status" value="1"/>
</dbReference>
<dbReference type="HAMAP" id="MF_01075">
    <property type="entry name" value="NhaP2"/>
    <property type="match status" value="1"/>
</dbReference>
<dbReference type="InterPro" id="IPR006153">
    <property type="entry name" value="Cation/H_exchanger_TM"/>
</dbReference>
<dbReference type="InterPro" id="IPR036318">
    <property type="entry name" value="FAD-bd_PCMH-like_sf"/>
</dbReference>
<dbReference type="InterPro" id="IPR016169">
    <property type="entry name" value="FAD-bd_PCMH_sub2"/>
</dbReference>
<dbReference type="InterPro" id="IPR038770">
    <property type="entry name" value="Na+/solute_symporter_sf"/>
</dbReference>
<dbReference type="InterPro" id="IPR023729">
    <property type="entry name" value="NhaP2"/>
</dbReference>
<dbReference type="InterPro" id="IPR006037">
    <property type="entry name" value="RCK_C"/>
</dbReference>
<dbReference type="InterPro" id="IPR036721">
    <property type="entry name" value="RCK_C_sf"/>
</dbReference>
<dbReference type="InterPro" id="IPR005170">
    <property type="entry name" value="Transptr-assoc_dom"/>
</dbReference>
<dbReference type="NCBIfam" id="NF003714">
    <property type="entry name" value="PRK05326.1-1"/>
    <property type="match status" value="1"/>
</dbReference>
<dbReference type="NCBIfam" id="NF003715">
    <property type="entry name" value="PRK05326.1-2"/>
    <property type="match status" value="1"/>
</dbReference>
<dbReference type="NCBIfam" id="NF003716">
    <property type="entry name" value="PRK05326.1-3"/>
    <property type="match status" value="1"/>
</dbReference>
<dbReference type="PANTHER" id="PTHR32507:SF7">
    <property type="entry name" value="K(+)_H(+) ANTIPORTER NHAP2"/>
    <property type="match status" value="1"/>
</dbReference>
<dbReference type="PANTHER" id="PTHR32507">
    <property type="entry name" value="NA(+)/H(+) ANTIPORTER 1"/>
    <property type="match status" value="1"/>
</dbReference>
<dbReference type="Pfam" id="PF03471">
    <property type="entry name" value="CorC_HlyC"/>
    <property type="match status" value="1"/>
</dbReference>
<dbReference type="Pfam" id="PF00999">
    <property type="entry name" value="Na_H_Exchanger"/>
    <property type="match status" value="1"/>
</dbReference>
<dbReference type="Pfam" id="PF02080">
    <property type="entry name" value="TrkA_C"/>
    <property type="match status" value="1"/>
</dbReference>
<dbReference type="SMART" id="SM01091">
    <property type="entry name" value="CorC_HlyC"/>
    <property type="match status" value="1"/>
</dbReference>
<dbReference type="SUPFAM" id="SSF56176">
    <property type="entry name" value="FAD-binding/transporter-associated domain-like"/>
    <property type="match status" value="1"/>
</dbReference>
<dbReference type="SUPFAM" id="SSF116726">
    <property type="entry name" value="TrkA C-terminal domain-like"/>
    <property type="match status" value="1"/>
</dbReference>
<dbReference type="PROSITE" id="PS51202">
    <property type="entry name" value="RCK_C"/>
    <property type="match status" value="1"/>
</dbReference>
<comment type="function">
    <text evidence="1">K(+)/H(+) antiporter that extrudes potassium in exchange for external protons and maintains the internal concentration of potassium under toxic levels.</text>
</comment>
<comment type="catalytic activity">
    <reaction evidence="1">
        <text>K(+)(in) + H(+)(out) = K(+)(out) + H(+)(in)</text>
        <dbReference type="Rhea" id="RHEA:29467"/>
        <dbReference type="ChEBI" id="CHEBI:15378"/>
        <dbReference type="ChEBI" id="CHEBI:29103"/>
    </reaction>
    <physiologicalReaction direction="left-to-right" evidence="1">
        <dbReference type="Rhea" id="RHEA:29468"/>
    </physiologicalReaction>
</comment>
<comment type="subcellular location">
    <subcellularLocation>
        <location evidence="1">Cell inner membrane</location>
        <topology evidence="1">Multi-pass membrane protein</topology>
    </subcellularLocation>
</comment>
<comment type="similarity">
    <text evidence="1">Belongs to the monovalent cation:proton antiporter 1 (CPA1) transporter (TC 2.A.36) family. NhaP2 subfamily.</text>
</comment>
<gene>
    <name evidence="1" type="primary">nhaP2</name>
    <name type="synonym">cvrA</name>
    <name type="ordered locus">PSEEN0371</name>
</gene>
<accession>Q1IG71</accession>
<evidence type="ECO:0000255" key="1">
    <source>
        <dbReference type="HAMAP-Rule" id="MF_01075"/>
    </source>
</evidence>
<protein>
    <recommendedName>
        <fullName evidence="1">K(+)/H(+) antiporter NhaP2</fullName>
    </recommendedName>
    <alternativeName>
        <fullName evidence="1">Potassium/proton antiporter NhaP2</fullName>
    </alternativeName>
</protein>
<sequence>MDASTINSLFLIGALLVGASILVSSLSSRLGIPILVIILAVGMLAGVDGGGIIFNNYPTAYLVGNLALAVILLDGGLRTRVASFRVALWPALSLATVGVLITTGLTGMVAAWLFDLSLIQGLLIGAIVGSTDAAAVFSLLGGKGLNERVTATLEIESGSNDPMAVFLTVTLIDMIASGQTGLHWSLLTHLLREFGIGGLMGLGGGWLMLQLVNRINLAGGLYPILVVAGGLVVFSLTNALHGSGFLAVYLCGLVLGNKPIRSRHGILHMLDGMAWLAQIGMFLVLGLLVTPHDLLPIALPALGLALWMILFARPLSVVAALLPFKAFHGREKGFISWVGLRGAVPIILAVFPLMAGLPDAQLFFNLAFFIVLVSLLVQGTSLPWMAKLLKVTVPPDPAPISRSALEVHVTSEWELFVYRLGAEKWCIGAALRELKMPEGTRIAALFRKEQLLHPSGSTVLEVGDMLCVIGHEHNLPALGKLFSQAPQRGLDLRFFGDFVLEGDAELGAVAALYGLKLDGLDAKMPLAQFIRQKVGGAPVVGDQIEWHGTIWTVAVMDGNKIQKVGVRFPEGTRPGPGLFL</sequence>
<keyword id="KW-0050">Antiport</keyword>
<keyword id="KW-0997">Cell inner membrane</keyword>
<keyword id="KW-1003">Cell membrane</keyword>
<keyword id="KW-0406">Ion transport</keyword>
<keyword id="KW-0472">Membrane</keyword>
<keyword id="KW-0630">Potassium</keyword>
<keyword id="KW-0633">Potassium transport</keyword>
<keyword id="KW-0812">Transmembrane</keyword>
<keyword id="KW-1133">Transmembrane helix</keyword>
<keyword id="KW-0813">Transport</keyword>
<feature type="chain" id="PRO_0000278157" description="K(+)/H(+) antiporter NhaP2">
    <location>
        <begin position="1"/>
        <end position="580"/>
    </location>
</feature>
<feature type="transmembrane region" description="Helical" evidence="1">
    <location>
        <begin position="6"/>
        <end position="26"/>
    </location>
</feature>
<feature type="transmembrane region" description="Helical" evidence="1">
    <location>
        <begin position="34"/>
        <end position="54"/>
    </location>
</feature>
<feature type="transmembrane region" description="Helical" evidence="1">
    <location>
        <begin position="57"/>
        <end position="77"/>
    </location>
</feature>
<feature type="transmembrane region" description="Helical" evidence="1">
    <location>
        <begin position="86"/>
        <end position="106"/>
    </location>
</feature>
<feature type="transmembrane region" description="Helical" evidence="1">
    <location>
        <begin position="108"/>
        <end position="128"/>
    </location>
</feature>
<feature type="transmembrane region" description="Helical" evidence="1">
    <location>
        <begin position="162"/>
        <end position="182"/>
    </location>
</feature>
<feature type="transmembrane region" description="Helical" evidence="1">
    <location>
        <begin position="193"/>
        <end position="213"/>
    </location>
</feature>
<feature type="transmembrane region" description="Helical" evidence="1">
    <location>
        <begin position="217"/>
        <end position="237"/>
    </location>
</feature>
<feature type="transmembrane region" description="Helical" evidence="1">
    <location>
        <begin position="240"/>
        <end position="260"/>
    </location>
</feature>
<feature type="transmembrane region" description="Helical" evidence="1">
    <location>
        <begin position="269"/>
        <end position="289"/>
    </location>
</feature>
<feature type="transmembrane region" description="Helical" evidence="1">
    <location>
        <begin position="292"/>
        <end position="312"/>
    </location>
</feature>
<feature type="transmembrane region" description="Helical" evidence="1">
    <location>
        <begin position="334"/>
        <end position="354"/>
    </location>
</feature>
<feature type="transmembrane region" description="Helical" evidence="1">
    <location>
        <begin position="362"/>
        <end position="382"/>
    </location>
</feature>
<feature type="domain" description="RCK C-terminal" evidence="1">
    <location>
        <begin position="402"/>
        <end position="484"/>
    </location>
</feature>
<organism>
    <name type="scientific">Pseudomonas entomophila (strain L48)</name>
    <dbReference type="NCBI Taxonomy" id="384676"/>
    <lineage>
        <taxon>Bacteria</taxon>
        <taxon>Pseudomonadati</taxon>
        <taxon>Pseudomonadota</taxon>
        <taxon>Gammaproteobacteria</taxon>
        <taxon>Pseudomonadales</taxon>
        <taxon>Pseudomonadaceae</taxon>
        <taxon>Pseudomonas</taxon>
    </lineage>
</organism>
<proteinExistence type="inferred from homology"/>
<name>NHAP2_PSEE4</name>
<reference key="1">
    <citation type="journal article" date="2006" name="Nat. Biotechnol.">
        <title>Complete genome sequence of the entomopathogenic and metabolically versatile soil bacterium Pseudomonas entomophila.</title>
        <authorList>
            <person name="Vodovar N."/>
            <person name="Vallenet D."/>
            <person name="Cruveiller S."/>
            <person name="Rouy Z."/>
            <person name="Barbe V."/>
            <person name="Acosta C."/>
            <person name="Cattolico L."/>
            <person name="Jubin C."/>
            <person name="Lajus A."/>
            <person name="Segurens B."/>
            <person name="Vacherie B."/>
            <person name="Wincker P."/>
            <person name="Weissenbach J."/>
            <person name="Lemaitre B."/>
            <person name="Medigue C."/>
            <person name="Boccard F."/>
        </authorList>
    </citation>
    <scope>NUCLEOTIDE SEQUENCE [LARGE SCALE GENOMIC DNA]</scope>
    <source>
        <strain>L48</strain>
    </source>
</reference>